<keyword id="KW-0067">ATP-binding</keyword>
<keyword id="KW-0963">Cytoplasm</keyword>
<keyword id="KW-0418">Kinase</keyword>
<keyword id="KW-0460">Magnesium</keyword>
<keyword id="KW-0479">Metal-binding</keyword>
<keyword id="KW-0546">Nucleotide metabolism</keyword>
<keyword id="KW-0547">Nucleotide-binding</keyword>
<keyword id="KW-0597">Phosphoprotein</keyword>
<keyword id="KW-0808">Transferase</keyword>
<accession>B6JKD1</accession>
<gene>
    <name evidence="1" type="primary">ndk</name>
    <name type="ordered locus">HPP12_0199</name>
</gene>
<proteinExistence type="inferred from homology"/>
<evidence type="ECO:0000255" key="1">
    <source>
        <dbReference type="HAMAP-Rule" id="MF_00451"/>
    </source>
</evidence>
<dbReference type="EC" id="2.7.4.6" evidence="1"/>
<dbReference type="EMBL" id="CP001217">
    <property type="protein sequence ID" value="ACJ07359.1"/>
    <property type="molecule type" value="Genomic_DNA"/>
</dbReference>
<dbReference type="SMR" id="B6JKD1"/>
<dbReference type="KEGG" id="hpp:HPP12_0199"/>
<dbReference type="HOGENOM" id="CLU_060216_8_1_7"/>
<dbReference type="Proteomes" id="UP000008198">
    <property type="component" value="Chromosome"/>
</dbReference>
<dbReference type="GO" id="GO:0005737">
    <property type="term" value="C:cytoplasm"/>
    <property type="evidence" value="ECO:0007669"/>
    <property type="project" value="UniProtKB-SubCell"/>
</dbReference>
<dbReference type="GO" id="GO:0005524">
    <property type="term" value="F:ATP binding"/>
    <property type="evidence" value="ECO:0007669"/>
    <property type="project" value="UniProtKB-UniRule"/>
</dbReference>
<dbReference type="GO" id="GO:0046872">
    <property type="term" value="F:metal ion binding"/>
    <property type="evidence" value="ECO:0007669"/>
    <property type="project" value="UniProtKB-KW"/>
</dbReference>
<dbReference type="GO" id="GO:0004550">
    <property type="term" value="F:nucleoside diphosphate kinase activity"/>
    <property type="evidence" value="ECO:0007669"/>
    <property type="project" value="UniProtKB-UniRule"/>
</dbReference>
<dbReference type="GO" id="GO:0006241">
    <property type="term" value="P:CTP biosynthetic process"/>
    <property type="evidence" value="ECO:0007669"/>
    <property type="project" value="UniProtKB-UniRule"/>
</dbReference>
<dbReference type="GO" id="GO:0006183">
    <property type="term" value="P:GTP biosynthetic process"/>
    <property type="evidence" value="ECO:0007669"/>
    <property type="project" value="UniProtKB-UniRule"/>
</dbReference>
<dbReference type="GO" id="GO:0006228">
    <property type="term" value="P:UTP biosynthetic process"/>
    <property type="evidence" value="ECO:0007669"/>
    <property type="project" value="UniProtKB-UniRule"/>
</dbReference>
<dbReference type="CDD" id="cd04413">
    <property type="entry name" value="NDPk_I"/>
    <property type="match status" value="1"/>
</dbReference>
<dbReference type="FunFam" id="3.30.70.141:FF:000001">
    <property type="entry name" value="Nucleoside diphosphate kinase"/>
    <property type="match status" value="1"/>
</dbReference>
<dbReference type="Gene3D" id="3.30.70.141">
    <property type="entry name" value="Nucleoside diphosphate kinase-like domain"/>
    <property type="match status" value="1"/>
</dbReference>
<dbReference type="HAMAP" id="MF_00451">
    <property type="entry name" value="NDP_kinase"/>
    <property type="match status" value="1"/>
</dbReference>
<dbReference type="InterPro" id="IPR034907">
    <property type="entry name" value="NDK-like_dom"/>
</dbReference>
<dbReference type="InterPro" id="IPR036850">
    <property type="entry name" value="NDK-like_dom_sf"/>
</dbReference>
<dbReference type="InterPro" id="IPR001564">
    <property type="entry name" value="Nucleoside_diP_kinase"/>
</dbReference>
<dbReference type="InterPro" id="IPR023005">
    <property type="entry name" value="Nucleoside_diP_kinase_AS"/>
</dbReference>
<dbReference type="NCBIfam" id="NF001908">
    <property type="entry name" value="PRK00668.1"/>
    <property type="match status" value="1"/>
</dbReference>
<dbReference type="PANTHER" id="PTHR46161">
    <property type="entry name" value="NUCLEOSIDE DIPHOSPHATE KINASE"/>
    <property type="match status" value="1"/>
</dbReference>
<dbReference type="PANTHER" id="PTHR46161:SF3">
    <property type="entry name" value="NUCLEOSIDE DIPHOSPHATE KINASE DDB_G0292928-RELATED"/>
    <property type="match status" value="1"/>
</dbReference>
<dbReference type="Pfam" id="PF00334">
    <property type="entry name" value="NDK"/>
    <property type="match status" value="1"/>
</dbReference>
<dbReference type="PRINTS" id="PR01243">
    <property type="entry name" value="NUCDPKINASE"/>
</dbReference>
<dbReference type="SMART" id="SM00562">
    <property type="entry name" value="NDK"/>
    <property type="match status" value="1"/>
</dbReference>
<dbReference type="SUPFAM" id="SSF54919">
    <property type="entry name" value="Nucleoside diphosphate kinase, NDK"/>
    <property type="match status" value="1"/>
</dbReference>
<dbReference type="PROSITE" id="PS00469">
    <property type="entry name" value="NDPK"/>
    <property type="match status" value="1"/>
</dbReference>
<dbReference type="PROSITE" id="PS51374">
    <property type="entry name" value="NDPK_LIKE"/>
    <property type="match status" value="1"/>
</dbReference>
<comment type="function">
    <text evidence="1">Major role in the synthesis of nucleoside triphosphates other than ATP. The ATP gamma phosphate is transferred to the NDP beta phosphate via a ping-pong mechanism, using a phosphorylated active-site intermediate.</text>
</comment>
<comment type="catalytic activity">
    <reaction evidence="1">
        <text>a 2'-deoxyribonucleoside 5'-diphosphate + ATP = a 2'-deoxyribonucleoside 5'-triphosphate + ADP</text>
        <dbReference type="Rhea" id="RHEA:44640"/>
        <dbReference type="ChEBI" id="CHEBI:30616"/>
        <dbReference type="ChEBI" id="CHEBI:61560"/>
        <dbReference type="ChEBI" id="CHEBI:73316"/>
        <dbReference type="ChEBI" id="CHEBI:456216"/>
        <dbReference type="EC" id="2.7.4.6"/>
    </reaction>
</comment>
<comment type="catalytic activity">
    <reaction evidence="1">
        <text>a ribonucleoside 5'-diphosphate + ATP = a ribonucleoside 5'-triphosphate + ADP</text>
        <dbReference type="Rhea" id="RHEA:18113"/>
        <dbReference type="ChEBI" id="CHEBI:30616"/>
        <dbReference type="ChEBI" id="CHEBI:57930"/>
        <dbReference type="ChEBI" id="CHEBI:61557"/>
        <dbReference type="ChEBI" id="CHEBI:456216"/>
        <dbReference type="EC" id="2.7.4.6"/>
    </reaction>
</comment>
<comment type="cofactor">
    <cofactor evidence="1">
        <name>Mg(2+)</name>
        <dbReference type="ChEBI" id="CHEBI:18420"/>
    </cofactor>
</comment>
<comment type="subunit">
    <text evidence="1">Homotetramer.</text>
</comment>
<comment type="subcellular location">
    <subcellularLocation>
        <location evidence="1">Cytoplasm</location>
    </subcellularLocation>
</comment>
<comment type="similarity">
    <text evidence="1">Belongs to the NDK family.</text>
</comment>
<organism>
    <name type="scientific">Helicobacter pylori (strain P12)</name>
    <dbReference type="NCBI Taxonomy" id="570508"/>
    <lineage>
        <taxon>Bacteria</taxon>
        <taxon>Pseudomonadati</taxon>
        <taxon>Campylobacterota</taxon>
        <taxon>Epsilonproteobacteria</taxon>
        <taxon>Campylobacterales</taxon>
        <taxon>Helicobacteraceae</taxon>
        <taxon>Helicobacter</taxon>
    </lineage>
</organism>
<reference key="1">
    <citation type="submission" date="2008-10" db="EMBL/GenBank/DDBJ databases">
        <title>The complete genome sequence of Helicobacter pylori strain P12.</title>
        <authorList>
            <person name="Fischer W."/>
            <person name="Windhager L."/>
            <person name="Karnholz A."/>
            <person name="Zeiller M."/>
            <person name="Zimmer R."/>
            <person name="Haas R."/>
        </authorList>
    </citation>
    <scope>NUCLEOTIDE SEQUENCE [LARGE SCALE GENOMIC DNA]</scope>
    <source>
        <strain>P12</strain>
    </source>
</reference>
<sequence>MKQRTLSIIKPDALKKKVVGKIIDRFESNGLEVVAMKRLHLSVKDAENFYAIHRERPFFKDLIEFMVSGPVVVMVLEGEDAVAKNRDLMGATDPKLAQKGTIRADFAESIDANAVHGSDSLENAHNEIAFFFATRDL</sequence>
<protein>
    <recommendedName>
        <fullName evidence="1">Nucleoside diphosphate kinase</fullName>
        <shortName evidence="1">NDK</shortName>
        <shortName evidence="1">NDP kinase</shortName>
        <ecNumber evidence="1">2.7.4.6</ecNumber>
    </recommendedName>
    <alternativeName>
        <fullName evidence="1">Nucleoside-2-P kinase</fullName>
    </alternativeName>
</protein>
<feature type="chain" id="PRO_1000192261" description="Nucleoside diphosphate kinase">
    <location>
        <begin position="1"/>
        <end position="137"/>
    </location>
</feature>
<feature type="active site" description="Pros-phosphohistidine intermediate" evidence="1">
    <location>
        <position position="116"/>
    </location>
</feature>
<feature type="binding site" evidence="1">
    <location>
        <position position="10"/>
    </location>
    <ligand>
        <name>ATP</name>
        <dbReference type="ChEBI" id="CHEBI:30616"/>
    </ligand>
</feature>
<feature type="binding site" evidence="1">
    <location>
        <position position="58"/>
    </location>
    <ligand>
        <name>ATP</name>
        <dbReference type="ChEBI" id="CHEBI:30616"/>
    </ligand>
</feature>
<feature type="binding site" evidence="1">
    <location>
        <position position="86"/>
    </location>
    <ligand>
        <name>ATP</name>
        <dbReference type="ChEBI" id="CHEBI:30616"/>
    </ligand>
</feature>
<feature type="binding site" evidence="1">
    <location>
        <position position="92"/>
    </location>
    <ligand>
        <name>ATP</name>
        <dbReference type="ChEBI" id="CHEBI:30616"/>
    </ligand>
</feature>
<feature type="binding site" evidence="1">
    <location>
        <position position="103"/>
    </location>
    <ligand>
        <name>ATP</name>
        <dbReference type="ChEBI" id="CHEBI:30616"/>
    </ligand>
</feature>
<feature type="binding site" evidence="1">
    <location>
        <position position="113"/>
    </location>
    <ligand>
        <name>ATP</name>
        <dbReference type="ChEBI" id="CHEBI:30616"/>
    </ligand>
</feature>
<name>NDK_HELP2</name>